<evidence type="ECO:0000255" key="1">
    <source>
        <dbReference type="HAMAP-Rule" id="MF_00445"/>
    </source>
</evidence>
<feature type="chain" id="PRO_0000391120" description="NADH-quinone oxidoreductase subunit N">
    <location>
        <begin position="1"/>
        <end position="486"/>
    </location>
</feature>
<feature type="transmembrane region" description="Helical" evidence="1">
    <location>
        <begin position="14"/>
        <end position="34"/>
    </location>
</feature>
<feature type="transmembrane region" description="Helical" evidence="1">
    <location>
        <begin position="45"/>
        <end position="65"/>
    </location>
</feature>
<feature type="transmembrane region" description="Helical" evidence="1">
    <location>
        <begin position="77"/>
        <end position="97"/>
    </location>
</feature>
<feature type="transmembrane region" description="Helical" evidence="1">
    <location>
        <begin position="105"/>
        <end position="125"/>
    </location>
</feature>
<feature type="transmembrane region" description="Helical" evidence="1">
    <location>
        <begin position="130"/>
        <end position="150"/>
    </location>
</feature>
<feature type="transmembrane region" description="Helical" evidence="1">
    <location>
        <begin position="163"/>
        <end position="183"/>
    </location>
</feature>
<feature type="transmembrane region" description="Helical" evidence="1">
    <location>
        <begin position="203"/>
        <end position="223"/>
    </location>
</feature>
<feature type="transmembrane region" description="Helical" evidence="1">
    <location>
        <begin position="237"/>
        <end position="257"/>
    </location>
</feature>
<feature type="transmembrane region" description="Helical" evidence="1">
    <location>
        <begin position="268"/>
        <end position="288"/>
    </location>
</feature>
<feature type="transmembrane region" description="Helical" evidence="1">
    <location>
        <begin position="299"/>
        <end position="319"/>
    </location>
</feature>
<feature type="transmembrane region" description="Helical" evidence="1">
    <location>
        <begin position="326"/>
        <end position="346"/>
    </location>
</feature>
<feature type="transmembrane region" description="Helical" evidence="1">
    <location>
        <begin position="377"/>
        <end position="397"/>
    </location>
</feature>
<feature type="transmembrane region" description="Helical" evidence="1">
    <location>
        <begin position="409"/>
        <end position="429"/>
    </location>
</feature>
<feature type="transmembrane region" description="Helical" evidence="1">
    <location>
        <begin position="459"/>
        <end position="479"/>
    </location>
</feature>
<proteinExistence type="inferred from homology"/>
<accession>A7HZW1</accession>
<dbReference type="EC" id="7.1.1.-" evidence="1"/>
<dbReference type="EMBL" id="CP000776">
    <property type="protein sequence ID" value="ABS52065.1"/>
    <property type="molecule type" value="Genomic_DNA"/>
</dbReference>
<dbReference type="RefSeq" id="WP_012108083.1">
    <property type="nucleotide sequence ID" value="NC_009714.1"/>
</dbReference>
<dbReference type="SMR" id="A7HZW1"/>
<dbReference type="STRING" id="360107.CHAB381_0194"/>
<dbReference type="KEGG" id="cha:CHAB381_0194"/>
<dbReference type="eggNOG" id="COG1007">
    <property type="taxonomic scope" value="Bacteria"/>
</dbReference>
<dbReference type="HOGENOM" id="CLU_007100_1_4_7"/>
<dbReference type="OrthoDB" id="9768329at2"/>
<dbReference type="Proteomes" id="UP000002407">
    <property type="component" value="Chromosome"/>
</dbReference>
<dbReference type="GO" id="GO:0005886">
    <property type="term" value="C:plasma membrane"/>
    <property type="evidence" value="ECO:0007669"/>
    <property type="project" value="UniProtKB-SubCell"/>
</dbReference>
<dbReference type="GO" id="GO:0008137">
    <property type="term" value="F:NADH dehydrogenase (ubiquinone) activity"/>
    <property type="evidence" value="ECO:0007669"/>
    <property type="project" value="InterPro"/>
</dbReference>
<dbReference type="GO" id="GO:0050136">
    <property type="term" value="F:NADH:ubiquinone reductase (non-electrogenic) activity"/>
    <property type="evidence" value="ECO:0007669"/>
    <property type="project" value="UniProtKB-UniRule"/>
</dbReference>
<dbReference type="GO" id="GO:0048038">
    <property type="term" value="F:quinone binding"/>
    <property type="evidence" value="ECO:0007669"/>
    <property type="project" value="UniProtKB-KW"/>
</dbReference>
<dbReference type="GO" id="GO:0042773">
    <property type="term" value="P:ATP synthesis coupled electron transport"/>
    <property type="evidence" value="ECO:0007669"/>
    <property type="project" value="InterPro"/>
</dbReference>
<dbReference type="HAMAP" id="MF_00445">
    <property type="entry name" value="NDH1_NuoN_1"/>
    <property type="match status" value="1"/>
</dbReference>
<dbReference type="InterPro" id="IPR010096">
    <property type="entry name" value="NADH-Q_OxRdtase_suN/2"/>
</dbReference>
<dbReference type="InterPro" id="IPR001750">
    <property type="entry name" value="ND/Mrp_TM"/>
</dbReference>
<dbReference type="NCBIfam" id="TIGR01770">
    <property type="entry name" value="NDH_I_N"/>
    <property type="match status" value="1"/>
</dbReference>
<dbReference type="NCBIfam" id="NF004444">
    <property type="entry name" value="PRK05777.2-2"/>
    <property type="match status" value="1"/>
</dbReference>
<dbReference type="PANTHER" id="PTHR22773">
    <property type="entry name" value="NADH DEHYDROGENASE"/>
    <property type="match status" value="1"/>
</dbReference>
<dbReference type="Pfam" id="PF00361">
    <property type="entry name" value="Proton_antipo_M"/>
    <property type="match status" value="1"/>
</dbReference>
<reference key="1">
    <citation type="submission" date="2007-07" db="EMBL/GenBank/DDBJ databases">
        <title>Complete genome sequence of Campylobacter hominis ATCC BAA-381, a commensal isolated from the human gastrointestinal tract.</title>
        <authorList>
            <person name="Fouts D.E."/>
            <person name="Mongodin E.F."/>
            <person name="Puiu D."/>
            <person name="Sebastian Y."/>
            <person name="Miller W.G."/>
            <person name="Mandrell R.E."/>
            <person name="Nelson K.E."/>
        </authorList>
    </citation>
    <scope>NUCLEOTIDE SEQUENCE [LARGE SCALE GENOMIC DNA]</scope>
    <source>
        <strain>ATCC BAA-381 / DSM 21671 / CCUG 45161 / LMG 19568 / NCTC 13146 / CH001A</strain>
    </source>
</reference>
<gene>
    <name evidence="1" type="primary">nuoN</name>
    <name type="ordered locus">CHAB381_0194</name>
</gene>
<comment type="function">
    <text evidence="1">NDH-1 shuttles electrons from NADH, via FMN and iron-sulfur (Fe-S) centers, to quinones in the respiratory chain. The immediate electron acceptor for the enzyme in this species is believed to be ubiquinone. Couples the redox reaction to proton translocation (for every two electrons transferred, four hydrogen ions are translocated across the cytoplasmic membrane), and thus conserves the redox energy in a proton gradient.</text>
</comment>
<comment type="catalytic activity">
    <reaction evidence="1">
        <text>a quinone + NADH + 5 H(+)(in) = a quinol + NAD(+) + 4 H(+)(out)</text>
        <dbReference type="Rhea" id="RHEA:57888"/>
        <dbReference type="ChEBI" id="CHEBI:15378"/>
        <dbReference type="ChEBI" id="CHEBI:24646"/>
        <dbReference type="ChEBI" id="CHEBI:57540"/>
        <dbReference type="ChEBI" id="CHEBI:57945"/>
        <dbReference type="ChEBI" id="CHEBI:132124"/>
    </reaction>
</comment>
<comment type="subunit">
    <text evidence="1">NDH-1 is composed of 14 different subunits. Subunits NuoA, H, J, K, L, M, N constitute the membrane sector of the complex.</text>
</comment>
<comment type="subcellular location">
    <subcellularLocation>
        <location evidence="1">Cell inner membrane</location>
        <topology evidence="1">Multi-pass membrane protein</topology>
    </subcellularLocation>
</comment>
<comment type="similarity">
    <text evidence="1">Belongs to the complex I subunit 2 family.</text>
</comment>
<name>NUON_CAMHC</name>
<keyword id="KW-0997">Cell inner membrane</keyword>
<keyword id="KW-1003">Cell membrane</keyword>
<keyword id="KW-0472">Membrane</keyword>
<keyword id="KW-0520">NAD</keyword>
<keyword id="KW-0874">Quinone</keyword>
<keyword id="KW-1185">Reference proteome</keyword>
<keyword id="KW-1278">Translocase</keyword>
<keyword id="KW-0812">Transmembrane</keyword>
<keyword id="KW-1133">Transmembrane helix</keyword>
<keyword id="KW-0813">Transport</keyword>
<keyword id="KW-0830">Ubiquinone</keyword>
<sequence length="486" mass="54616">MKNLIDFGILNLSSIAPMMVLSLFAVFILVLNFINKNISRTFWTMLAILGLAINIFFLFGYSGIVRGFFDLVLIDGFAFISMIIILLFSILFLPLTLSKENFHDCSLAEFYALYLFMIVGYEFMVSSQNLIVILVGLETSSLALYTLIALHNRTRAIEAAIKYFTMGALSTGFFCFAIVIFYLSSASLDISAISYSAKNTDSILIATACIFLICSIGFKLSLIPFHTWIPDVYEGSSEVMAGYISIVPKIAGFIVAMRVFESLYDSNIAFIQISLYIIAVLTMTLANIMALIQNDVKRMLAFSSISHAGFVLCAVVIGTKSANIGLFLYWLMFSFANLGAFSVLWFTRNKQNIWHERFDHPFEKFNGLVKFLPYTSFLMALFMISLAGIPPFSVFWGKMYLMGSAISSGFIFMAVIMAINSAIAVYYYLRIIVCMFLKEPLENAEATLYKQNSSNAIKFIITFSAILCILAPFMVKFWTDFVLKFI</sequence>
<organism>
    <name type="scientific">Campylobacter hominis (strain ATCC BAA-381 / DSM 21671 / CCUG 45161 / LMG 19568 / NCTC 13146 / CH001A)</name>
    <dbReference type="NCBI Taxonomy" id="360107"/>
    <lineage>
        <taxon>Bacteria</taxon>
        <taxon>Pseudomonadati</taxon>
        <taxon>Campylobacterota</taxon>
        <taxon>Epsilonproteobacteria</taxon>
        <taxon>Campylobacterales</taxon>
        <taxon>Campylobacteraceae</taxon>
        <taxon>Campylobacter</taxon>
    </lineage>
</organism>
<protein>
    <recommendedName>
        <fullName evidence="1">NADH-quinone oxidoreductase subunit N</fullName>
        <ecNumber evidence="1">7.1.1.-</ecNumber>
    </recommendedName>
    <alternativeName>
        <fullName evidence="1">NADH dehydrogenase I subunit N</fullName>
    </alternativeName>
    <alternativeName>
        <fullName evidence="1">NDH-1 subunit N</fullName>
    </alternativeName>
</protein>